<keyword id="KW-0067">ATP-binding</keyword>
<keyword id="KW-0153">Cholesterol metabolism</keyword>
<keyword id="KW-0276">Fatty acid metabolism</keyword>
<keyword id="KW-0436">Ligase</keyword>
<keyword id="KW-0443">Lipid metabolism</keyword>
<keyword id="KW-0547">Nucleotide-binding</keyword>
<keyword id="KW-1185">Reference proteome</keyword>
<keyword id="KW-0753">Steroid metabolism</keyword>
<keyword id="KW-1207">Sterol metabolism</keyword>
<reference key="1">
    <citation type="journal article" date="2003" name="Proc. Natl. Acad. Sci. U.S.A.">
        <title>The complete genome sequence of Mycobacterium bovis.</title>
        <authorList>
            <person name="Garnier T."/>
            <person name="Eiglmeier K."/>
            <person name="Camus J.-C."/>
            <person name="Medina N."/>
            <person name="Mansoor H."/>
            <person name="Pryor M."/>
            <person name="Duthoy S."/>
            <person name="Grondin S."/>
            <person name="Lacroix C."/>
            <person name="Monsempe C."/>
            <person name="Simon S."/>
            <person name="Harris B."/>
            <person name="Atkin R."/>
            <person name="Doggett J."/>
            <person name="Mayes R."/>
            <person name="Keating L."/>
            <person name="Wheeler P.R."/>
            <person name="Parkhill J."/>
            <person name="Barrell B.G."/>
            <person name="Cole S.T."/>
            <person name="Gordon S.V."/>
            <person name="Hewinson R.G."/>
        </authorList>
    </citation>
    <scope>NUCLEOTIDE SEQUENCE [LARGE SCALE GENOMIC DNA]</scope>
    <source>
        <strain>ATCC BAA-935 / AF2122/97</strain>
    </source>
</reference>
<reference key="2">
    <citation type="journal article" date="2017" name="Genome Announc.">
        <title>Updated reference genome sequence and annotation of Mycobacterium bovis AF2122/97.</title>
        <authorList>
            <person name="Malone K.M."/>
            <person name="Farrell D."/>
            <person name="Stuber T.P."/>
            <person name="Schubert O.T."/>
            <person name="Aebersold R."/>
            <person name="Robbe-Austerman S."/>
            <person name="Gordon S.V."/>
        </authorList>
    </citation>
    <scope>NUCLEOTIDE SEQUENCE [LARGE SCALE GENOMIC DNA]</scope>
    <scope>GENOME REANNOTATION</scope>
    <source>
        <strain>ATCC BAA-935 / AF2122/97</strain>
    </source>
</reference>
<feature type="chain" id="PRO_0000406791" description="Medium/long-chain-fatty-acid--CoA/3-oxocholest-4-en-26-oate--CoA ligase">
    <location>
        <begin position="1"/>
        <end position="548"/>
    </location>
</feature>
<feature type="region of interest" description="Disordered" evidence="3">
    <location>
        <begin position="520"/>
        <end position="548"/>
    </location>
</feature>
<feature type="compositionally biased region" description="Basic and acidic residues" evidence="3">
    <location>
        <begin position="520"/>
        <end position="541"/>
    </location>
</feature>
<feature type="binding site" evidence="1">
    <location>
        <begin position="174"/>
        <end position="182"/>
    </location>
    <ligand>
        <name>ATP</name>
        <dbReference type="ChEBI" id="CHEBI:30616"/>
    </ligand>
</feature>
<feature type="binding site" evidence="1">
    <location>
        <position position="415"/>
    </location>
    <ligand>
        <name>ATP</name>
        <dbReference type="ChEBI" id="CHEBI:30616"/>
    </ligand>
</feature>
<feature type="binding site" evidence="1">
    <location>
        <position position="430"/>
    </location>
    <ligand>
        <name>ATP</name>
        <dbReference type="ChEBI" id="CHEBI:30616"/>
    </ligand>
</feature>
<feature type="binding site" evidence="1">
    <location>
        <position position="521"/>
    </location>
    <ligand>
        <name>ATP</name>
        <dbReference type="ChEBI" id="CHEBI:30616"/>
    </ligand>
</feature>
<protein>
    <recommendedName>
        <fullName evidence="2">Medium/long-chain-fatty-acid--CoA/3-oxocholest-4-en-26-oate--CoA ligase</fullName>
        <shortName evidence="2">FACL</shortName>
        <ecNumber evidence="2">6.2.1.2</ecNumber>
        <ecNumber evidence="2">6.2.1.3</ecNumber>
        <ecNumber evidence="2">6.2.1.42</ecNumber>
    </recommendedName>
    <alternativeName>
        <fullName evidence="2">Acyl-CoA synthetase</fullName>
    </alternativeName>
    <alternativeName>
        <fullName evidence="2">Steroid-CoA ligase</fullName>
    </alternativeName>
    <alternativeName>
        <fullName evidence="2">Steroid-coenzyme A ligase</fullName>
    </alternativeName>
</protein>
<accession>Q7TWB7</accession>
<accession>A0A1R3Y4F6</accession>
<accession>X2BNN2</accession>
<sequence>MAVALNIADLAEHAIDAVPDRVAVICGDEQLTYAQLEDKANRLAHHLIDQGVQKDDKVGLYCRNRIEIVIAMLGIVKAGAILVNVNFRYVEGELRYLFDNSDMVALVHERRYADRVANVLPDTPHVRTILVVEDGSDQDYRRYGGVEFYSAIAAGSPERDFGERSADAIYLLYTGGTTGFPKGVMWRHEDIYRVLFGGTDFATGEFVKDEYDLAKAAAANPPMIRYPIPPMIHGATQSATWMALFSGQTTVLAPEFNADEVWRTIHKHKVNLLFFTGDAMARPLVDALVKGNDYDLSSLFLLASTAALFSPSIKEKLLELLPNRVITDSIGSSETGFGGTSVVAAGQAHGGGPRVRIDHRTVVLDDDGNEVKPGSGMRGVIAKKGNIPVGYYKDEKKTAETFRTINGVRYAIPGDYAQVEEDGTVTMLGRGSVSINSGGEKVYPEEVEAALKGHPDVFDALVVGVPDPRYGQQVAAVVQARPGCRPSLAELDSFVRSEIAGYKVPRSLWFVDEVKRSPAGKPDYRWAKEQTEARPADDVHAGHVTSGG</sequence>
<evidence type="ECO:0000250" key="1"/>
<evidence type="ECO:0000250" key="2">
    <source>
        <dbReference type="UniProtKB" id="P9WQ51"/>
    </source>
</evidence>
<evidence type="ECO:0000256" key="3">
    <source>
        <dbReference type="SAM" id="MobiDB-lite"/>
    </source>
</evidence>
<evidence type="ECO:0000305" key="4"/>
<comment type="function">
    <text evidence="2">Catalyzes the activation of medium/long-chain fatty acids as acyl-coenzyme A (acyl-CoA), which are then transferred to the multifunctional polyketide synthase (PKS) type III for further chain extension. Also involved in the degradation of cholesterol via the degradation of the side chains of C-24 branched-chain sterols. Catalyzes the ATP-dependent CoA thioesterification of the sterol 3-oxocholest-4-en-26-oate to yield 3-oxocholest-4-en-26-oyl-CoA.</text>
</comment>
<comment type="catalytic activity">
    <reaction evidence="2">
        <text>a medium-chain fatty acid + ATP + CoA = a medium-chain fatty acyl-CoA + AMP + diphosphate</text>
        <dbReference type="Rhea" id="RHEA:48340"/>
        <dbReference type="ChEBI" id="CHEBI:30616"/>
        <dbReference type="ChEBI" id="CHEBI:33019"/>
        <dbReference type="ChEBI" id="CHEBI:57287"/>
        <dbReference type="ChEBI" id="CHEBI:59558"/>
        <dbReference type="ChEBI" id="CHEBI:90546"/>
        <dbReference type="ChEBI" id="CHEBI:456215"/>
        <dbReference type="EC" id="6.2.1.2"/>
    </reaction>
</comment>
<comment type="catalytic activity">
    <reaction evidence="2">
        <text>a long-chain fatty acid + ATP + CoA = a long-chain fatty acyl-CoA + AMP + diphosphate</text>
        <dbReference type="Rhea" id="RHEA:15421"/>
        <dbReference type="ChEBI" id="CHEBI:30616"/>
        <dbReference type="ChEBI" id="CHEBI:33019"/>
        <dbReference type="ChEBI" id="CHEBI:57287"/>
        <dbReference type="ChEBI" id="CHEBI:57560"/>
        <dbReference type="ChEBI" id="CHEBI:83139"/>
        <dbReference type="ChEBI" id="CHEBI:456215"/>
        <dbReference type="EC" id="6.2.1.3"/>
    </reaction>
</comment>
<comment type="catalytic activity">
    <reaction evidence="2">
        <text>(25S)-3-oxocholest-4-en-26-oate + ATP + CoA = (25S)-3-oxocholest-4-en-26-oyl-CoA + AMP + diphosphate</text>
        <dbReference type="Rhea" id="RHEA:29291"/>
        <dbReference type="ChEBI" id="CHEBI:30616"/>
        <dbReference type="ChEBI" id="CHEBI:33019"/>
        <dbReference type="ChEBI" id="CHEBI:57287"/>
        <dbReference type="ChEBI" id="CHEBI:71541"/>
        <dbReference type="ChEBI" id="CHEBI:83819"/>
        <dbReference type="ChEBI" id="CHEBI:456215"/>
        <dbReference type="EC" id="6.2.1.42"/>
    </reaction>
</comment>
<comment type="pathway">
    <text evidence="2">Lipid metabolism; fatty acid biosynthesis.</text>
</comment>
<comment type="pathway">
    <text evidence="2">Steroid metabolism; cholesterol metabolism.</text>
</comment>
<comment type="similarity">
    <text evidence="4">Belongs to the ATP-dependent AMP-binding enzyme family.</text>
</comment>
<name>FAC19_MYCBO</name>
<proteinExistence type="inferred from homology"/>
<dbReference type="EC" id="6.2.1.2" evidence="2"/>
<dbReference type="EC" id="6.2.1.3" evidence="2"/>
<dbReference type="EC" id="6.2.1.42" evidence="2"/>
<dbReference type="EMBL" id="LT708304">
    <property type="protein sequence ID" value="SIU02171.1"/>
    <property type="molecule type" value="Genomic_DNA"/>
</dbReference>
<dbReference type="RefSeq" id="NP_857183.1">
    <property type="nucleotide sequence ID" value="NC_002945.3"/>
</dbReference>
<dbReference type="RefSeq" id="WP_003901660.1">
    <property type="nucleotide sequence ID" value="NC_002945.4"/>
</dbReference>
<dbReference type="SMR" id="Q7TWB7"/>
<dbReference type="KEGG" id="mbo:BQ2027_MB3544C"/>
<dbReference type="PATRIC" id="fig|233413.5.peg.3883"/>
<dbReference type="UniPathway" id="UPA00094"/>
<dbReference type="UniPathway" id="UPA00296"/>
<dbReference type="Proteomes" id="UP000001419">
    <property type="component" value="Chromosome"/>
</dbReference>
<dbReference type="GO" id="GO:0005524">
    <property type="term" value="F:ATP binding"/>
    <property type="evidence" value="ECO:0007669"/>
    <property type="project" value="UniProtKB-KW"/>
</dbReference>
<dbReference type="GO" id="GO:0004467">
    <property type="term" value="F:long-chain fatty acid-CoA ligase activity"/>
    <property type="evidence" value="ECO:0007669"/>
    <property type="project" value="UniProtKB-EC"/>
</dbReference>
<dbReference type="GO" id="GO:0031956">
    <property type="term" value="F:medium-chain fatty acid-CoA ligase activity"/>
    <property type="evidence" value="ECO:0007669"/>
    <property type="project" value="UniProtKB-EC"/>
</dbReference>
<dbReference type="GO" id="GO:0008203">
    <property type="term" value="P:cholesterol metabolic process"/>
    <property type="evidence" value="ECO:0007669"/>
    <property type="project" value="UniProtKB-UniPathway"/>
</dbReference>
<dbReference type="GO" id="GO:0006633">
    <property type="term" value="P:fatty acid biosynthetic process"/>
    <property type="evidence" value="ECO:0007669"/>
    <property type="project" value="UniProtKB-UniPathway"/>
</dbReference>
<dbReference type="CDD" id="cd05924">
    <property type="entry name" value="FACL_like_5"/>
    <property type="match status" value="1"/>
</dbReference>
<dbReference type="FunFam" id="3.40.50.12780:FF:000043">
    <property type="entry name" value="Acyl-CoA synthetase"/>
    <property type="match status" value="1"/>
</dbReference>
<dbReference type="FunFam" id="3.30.300.30:FF:000032">
    <property type="entry name" value="Fatty-acid-CoA ligase FadD19"/>
    <property type="match status" value="1"/>
</dbReference>
<dbReference type="Gene3D" id="3.30.300.30">
    <property type="match status" value="1"/>
</dbReference>
<dbReference type="Gene3D" id="3.40.50.12780">
    <property type="entry name" value="N-terminal domain of ligase-like"/>
    <property type="match status" value="1"/>
</dbReference>
<dbReference type="InterPro" id="IPR025110">
    <property type="entry name" value="AMP-bd_C"/>
</dbReference>
<dbReference type="InterPro" id="IPR045851">
    <property type="entry name" value="AMP-bd_C_sf"/>
</dbReference>
<dbReference type="InterPro" id="IPR020845">
    <property type="entry name" value="AMP-binding_CS"/>
</dbReference>
<dbReference type="InterPro" id="IPR000873">
    <property type="entry name" value="AMP-dep_synth/lig_dom"/>
</dbReference>
<dbReference type="InterPro" id="IPR042099">
    <property type="entry name" value="ANL_N_sf"/>
</dbReference>
<dbReference type="InterPro" id="IPR050237">
    <property type="entry name" value="ATP-dep_AMP-bd_enzyme"/>
</dbReference>
<dbReference type="NCBIfam" id="NF005863">
    <property type="entry name" value="PRK07798.1"/>
    <property type="match status" value="1"/>
</dbReference>
<dbReference type="PANTHER" id="PTHR43767">
    <property type="entry name" value="LONG-CHAIN-FATTY-ACID--COA LIGASE"/>
    <property type="match status" value="1"/>
</dbReference>
<dbReference type="PANTHER" id="PTHR43767:SF1">
    <property type="entry name" value="NONRIBOSOMAL PEPTIDE SYNTHASE PES1 (EUROFUNG)-RELATED"/>
    <property type="match status" value="1"/>
</dbReference>
<dbReference type="Pfam" id="PF00501">
    <property type="entry name" value="AMP-binding"/>
    <property type="match status" value="1"/>
</dbReference>
<dbReference type="Pfam" id="PF13193">
    <property type="entry name" value="AMP-binding_C"/>
    <property type="match status" value="1"/>
</dbReference>
<dbReference type="SUPFAM" id="SSF56801">
    <property type="entry name" value="Acetyl-CoA synthetase-like"/>
    <property type="match status" value="1"/>
</dbReference>
<dbReference type="PROSITE" id="PS00455">
    <property type="entry name" value="AMP_BINDING"/>
    <property type="match status" value="1"/>
</dbReference>
<organism>
    <name type="scientific">Mycobacterium bovis (strain ATCC BAA-935 / AF2122/97)</name>
    <dbReference type="NCBI Taxonomy" id="233413"/>
    <lineage>
        <taxon>Bacteria</taxon>
        <taxon>Bacillati</taxon>
        <taxon>Actinomycetota</taxon>
        <taxon>Actinomycetes</taxon>
        <taxon>Mycobacteriales</taxon>
        <taxon>Mycobacteriaceae</taxon>
        <taxon>Mycobacterium</taxon>
        <taxon>Mycobacterium tuberculosis complex</taxon>
    </lineage>
</organism>
<gene>
    <name evidence="2" type="primary">fadD19</name>
    <name type="ordered locus">BQ2027_MB3544C</name>
</gene>